<keyword id="KW-0067">ATP-binding</keyword>
<keyword id="KW-1003">Cell membrane</keyword>
<keyword id="KW-0472">Membrane</keyword>
<keyword id="KW-0547">Nucleotide-binding</keyword>
<keyword id="KW-1278">Translocase</keyword>
<keyword id="KW-0812">Transmembrane</keyword>
<keyword id="KW-1133">Transmembrane helix</keyword>
<keyword id="KW-0813">Transport</keyword>
<proteinExistence type="inferred from homology"/>
<name>Y1788_STAAS</name>
<sequence>MIKRYLQFVKPYKYRIFATIIVGIIKFGIPMLIPLLIKYAIDGVINNHALTTDEKVHHLTIAIGIALFIFVIVRPPIEFIRQYLAQWTSNKILYDIRKKLYNHLQALSARFYANNQVGQVISRVINDVEQTKDFILTGLMNIWLDCITIIIALSIMFFLDVKLTLAALFIFPFYILTVYVFFGRLRKLTRERSQALAEVQGFLHERVQGISVVKSFAIEDNEAKNFDKKNTNFLTRALKHTRWNAYSFAAINTVTDIGPIIVIGVGAYLAISGSITVGTLAAFVGYLELLFGPLRRLVASFTTLTQSFASMDRVFQLIDEDYDIKNGVGAQPIEIKQGRIDIDHVSFQYNDNEAPILKDINLSIEKGETVAFVGMSGGGKSTLINLIPRFYDVTSGQILIDGHNIKDFLTGSLRNQIGLVQQDNILFSDTVKENILLGRPTATDEEVVEAAKMANAHDFIMNLPQGYDTEVGERGVKLSGGQKQRLSIARIFLNNPPILILDEATSALDLESESIIQEALDVLSKDRTTLIVAHRLSTITHADKIVVIENGHIVETGTHRELIAKQGAYEHLYSIQNL</sequence>
<evidence type="ECO:0000250" key="1"/>
<evidence type="ECO:0000255" key="2"/>
<evidence type="ECO:0000255" key="3">
    <source>
        <dbReference type="PROSITE-ProRule" id="PRU00434"/>
    </source>
</evidence>
<evidence type="ECO:0000255" key="4">
    <source>
        <dbReference type="PROSITE-ProRule" id="PRU00441"/>
    </source>
</evidence>
<evidence type="ECO:0000305" key="5"/>
<protein>
    <recommendedName>
        <fullName>Putative multidrug export ATP-binding/permease protein SAS1788</fullName>
        <ecNumber>7.6.2.-</ecNumber>
    </recommendedName>
</protein>
<reference key="1">
    <citation type="journal article" date="2004" name="Proc. Natl. Acad. Sci. U.S.A.">
        <title>Complete genomes of two clinical Staphylococcus aureus strains: evidence for the rapid evolution of virulence and drug resistance.</title>
        <authorList>
            <person name="Holden M.T.G."/>
            <person name="Feil E.J."/>
            <person name="Lindsay J.A."/>
            <person name="Peacock S.J."/>
            <person name="Day N.P.J."/>
            <person name="Enright M.C."/>
            <person name="Foster T.J."/>
            <person name="Moore C.E."/>
            <person name="Hurst L."/>
            <person name="Atkin R."/>
            <person name="Barron A."/>
            <person name="Bason N."/>
            <person name="Bentley S.D."/>
            <person name="Chillingworth C."/>
            <person name="Chillingworth T."/>
            <person name="Churcher C."/>
            <person name="Clark L."/>
            <person name="Corton C."/>
            <person name="Cronin A."/>
            <person name="Doggett J."/>
            <person name="Dowd L."/>
            <person name="Feltwell T."/>
            <person name="Hance Z."/>
            <person name="Harris B."/>
            <person name="Hauser H."/>
            <person name="Holroyd S."/>
            <person name="Jagels K."/>
            <person name="James K.D."/>
            <person name="Lennard N."/>
            <person name="Line A."/>
            <person name="Mayes R."/>
            <person name="Moule S."/>
            <person name="Mungall K."/>
            <person name="Ormond D."/>
            <person name="Quail M.A."/>
            <person name="Rabbinowitsch E."/>
            <person name="Rutherford K.M."/>
            <person name="Sanders M."/>
            <person name="Sharp S."/>
            <person name="Simmonds M."/>
            <person name="Stevens K."/>
            <person name="Whitehead S."/>
            <person name="Barrell B.G."/>
            <person name="Spratt B.G."/>
            <person name="Parkhill J."/>
        </authorList>
    </citation>
    <scope>NUCLEOTIDE SEQUENCE [LARGE SCALE GENOMIC DNA]</scope>
    <source>
        <strain>MSSA476</strain>
    </source>
</reference>
<feature type="chain" id="PRO_0000271552" description="Putative multidrug export ATP-binding/permease protein SAS1788">
    <location>
        <begin position="1"/>
        <end position="578"/>
    </location>
</feature>
<feature type="topological domain" description="Cytoplasmic" evidence="2">
    <location>
        <begin position="1"/>
        <end position="15"/>
    </location>
</feature>
<feature type="transmembrane region" description="Helical" evidence="4">
    <location>
        <begin position="16"/>
        <end position="36"/>
    </location>
</feature>
<feature type="topological domain" description="Extracellular" evidence="2">
    <location>
        <begin position="37"/>
        <end position="59"/>
    </location>
</feature>
<feature type="transmembrane region" description="Helical" evidence="4">
    <location>
        <begin position="60"/>
        <end position="80"/>
    </location>
</feature>
<feature type="topological domain" description="Cytoplasmic" evidence="2">
    <location>
        <begin position="81"/>
        <end position="138"/>
    </location>
</feature>
<feature type="transmembrane region" description="Helical" evidence="4">
    <location>
        <begin position="139"/>
        <end position="159"/>
    </location>
</feature>
<feature type="topological domain" description="Extracellular" evidence="2">
    <location>
        <begin position="160"/>
        <end position="162"/>
    </location>
</feature>
<feature type="transmembrane region" description="Helical" evidence="4">
    <location>
        <begin position="163"/>
        <end position="183"/>
    </location>
</feature>
<feature type="topological domain" description="Cytoplasmic" evidence="2">
    <location>
        <begin position="184"/>
        <end position="244"/>
    </location>
</feature>
<feature type="transmembrane region" description="Helical" evidence="4">
    <location>
        <begin position="245"/>
        <end position="263"/>
    </location>
</feature>
<feature type="topological domain" description="Extracellular" evidence="2">
    <location>
        <begin position="264"/>
        <end position="269"/>
    </location>
</feature>
<feature type="transmembrane region" description="Helical" evidence="4">
    <location>
        <begin position="270"/>
        <end position="287"/>
    </location>
</feature>
<feature type="topological domain" description="Cytoplasmic" evidence="2">
    <location>
        <begin position="288"/>
        <end position="578"/>
    </location>
</feature>
<feature type="domain" description="ABC transmembrane type-1" evidence="4">
    <location>
        <begin position="16"/>
        <end position="306"/>
    </location>
</feature>
<feature type="domain" description="ABC transporter" evidence="3">
    <location>
        <begin position="340"/>
        <end position="575"/>
    </location>
</feature>
<feature type="binding site" evidence="3">
    <location>
        <begin position="374"/>
        <end position="381"/>
    </location>
    <ligand>
        <name>ATP</name>
        <dbReference type="ChEBI" id="CHEBI:30616"/>
    </ligand>
</feature>
<organism>
    <name type="scientific">Staphylococcus aureus (strain MSSA476)</name>
    <dbReference type="NCBI Taxonomy" id="282459"/>
    <lineage>
        <taxon>Bacteria</taxon>
        <taxon>Bacillati</taxon>
        <taxon>Bacillota</taxon>
        <taxon>Bacilli</taxon>
        <taxon>Bacillales</taxon>
        <taxon>Staphylococcaceae</taxon>
        <taxon>Staphylococcus</taxon>
    </lineage>
</organism>
<accession>Q6G868</accession>
<comment type="function">
    <text evidence="1">May be involved in multidrug export. Transmembrane domains (TMD) form a pore in the cell membrane and the ATP-binding domain (NBD) is responsible for energy generation (By similarity).</text>
</comment>
<comment type="subunit">
    <text evidence="1">Homodimer.</text>
</comment>
<comment type="subcellular location">
    <subcellularLocation>
        <location evidence="1">Cell membrane</location>
        <topology evidence="4">Multi-pass membrane protein</topology>
    </subcellularLocation>
</comment>
<comment type="domain">
    <text>The ATP-binding domain (NBD) and the transmembrane domain (TMD) are fused.</text>
</comment>
<comment type="similarity">
    <text evidence="5">Belongs to the ABC transporter superfamily.</text>
</comment>
<dbReference type="EC" id="7.6.2.-"/>
<dbReference type="EMBL" id="BX571857">
    <property type="protein sequence ID" value="CAG43593.1"/>
    <property type="molecule type" value="Genomic_DNA"/>
</dbReference>
<dbReference type="RefSeq" id="WP_000597238.1">
    <property type="nucleotide sequence ID" value="NC_002953.3"/>
</dbReference>
<dbReference type="SMR" id="Q6G868"/>
<dbReference type="KEGG" id="sas:SAS1788"/>
<dbReference type="HOGENOM" id="CLU_000604_84_3_9"/>
<dbReference type="GO" id="GO:0005886">
    <property type="term" value="C:plasma membrane"/>
    <property type="evidence" value="ECO:0007669"/>
    <property type="project" value="UniProtKB-SubCell"/>
</dbReference>
<dbReference type="GO" id="GO:0015421">
    <property type="term" value="F:ABC-type oligopeptide transporter activity"/>
    <property type="evidence" value="ECO:0007669"/>
    <property type="project" value="TreeGrafter"/>
</dbReference>
<dbReference type="GO" id="GO:0005524">
    <property type="term" value="F:ATP binding"/>
    <property type="evidence" value="ECO:0007669"/>
    <property type="project" value="UniProtKB-KW"/>
</dbReference>
<dbReference type="GO" id="GO:0016887">
    <property type="term" value="F:ATP hydrolysis activity"/>
    <property type="evidence" value="ECO:0007669"/>
    <property type="project" value="InterPro"/>
</dbReference>
<dbReference type="CDD" id="cd18554">
    <property type="entry name" value="ABC_6TM_Sav1866_like"/>
    <property type="match status" value="1"/>
</dbReference>
<dbReference type="CDD" id="cd03251">
    <property type="entry name" value="ABCC_MsbA"/>
    <property type="match status" value="1"/>
</dbReference>
<dbReference type="FunFam" id="1.20.1560.10:FF:000069">
    <property type="entry name" value="Multidrug ABC transporter ATP-binding protein"/>
    <property type="match status" value="1"/>
</dbReference>
<dbReference type="FunFam" id="3.40.50.300:FF:000218">
    <property type="entry name" value="Multidrug ABC transporter ATP-binding protein"/>
    <property type="match status" value="1"/>
</dbReference>
<dbReference type="Gene3D" id="1.20.1560.10">
    <property type="entry name" value="ABC transporter type 1, transmembrane domain"/>
    <property type="match status" value="1"/>
</dbReference>
<dbReference type="Gene3D" id="3.40.50.300">
    <property type="entry name" value="P-loop containing nucleotide triphosphate hydrolases"/>
    <property type="match status" value="1"/>
</dbReference>
<dbReference type="InterPro" id="IPR003593">
    <property type="entry name" value="AAA+_ATPase"/>
</dbReference>
<dbReference type="InterPro" id="IPR011527">
    <property type="entry name" value="ABC1_TM_dom"/>
</dbReference>
<dbReference type="InterPro" id="IPR036640">
    <property type="entry name" value="ABC1_TM_sf"/>
</dbReference>
<dbReference type="InterPro" id="IPR003439">
    <property type="entry name" value="ABC_transporter-like_ATP-bd"/>
</dbReference>
<dbReference type="InterPro" id="IPR017871">
    <property type="entry name" value="ABC_transporter-like_CS"/>
</dbReference>
<dbReference type="InterPro" id="IPR027417">
    <property type="entry name" value="P-loop_NTPase"/>
</dbReference>
<dbReference type="InterPro" id="IPR039421">
    <property type="entry name" value="Type_1_exporter"/>
</dbReference>
<dbReference type="PANTHER" id="PTHR43394:SF1">
    <property type="entry name" value="ATP-BINDING CASSETTE SUB-FAMILY B MEMBER 10, MITOCHONDRIAL"/>
    <property type="match status" value="1"/>
</dbReference>
<dbReference type="PANTHER" id="PTHR43394">
    <property type="entry name" value="ATP-DEPENDENT PERMEASE MDL1, MITOCHONDRIAL"/>
    <property type="match status" value="1"/>
</dbReference>
<dbReference type="Pfam" id="PF00664">
    <property type="entry name" value="ABC_membrane"/>
    <property type="match status" value="1"/>
</dbReference>
<dbReference type="Pfam" id="PF00005">
    <property type="entry name" value="ABC_tran"/>
    <property type="match status" value="1"/>
</dbReference>
<dbReference type="SMART" id="SM00382">
    <property type="entry name" value="AAA"/>
    <property type="match status" value="1"/>
</dbReference>
<dbReference type="SUPFAM" id="SSF90123">
    <property type="entry name" value="ABC transporter transmembrane region"/>
    <property type="match status" value="1"/>
</dbReference>
<dbReference type="SUPFAM" id="SSF52540">
    <property type="entry name" value="P-loop containing nucleoside triphosphate hydrolases"/>
    <property type="match status" value="1"/>
</dbReference>
<dbReference type="PROSITE" id="PS50929">
    <property type="entry name" value="ABC_TM1F"/>
    <property type="match status" value="1"/>
</dbReference>
<dbReference type="PROSITE" id="PS00211">
    <property type="entry name" value="ABC_TRANSPORTER_1"/>
    <property type="match status" value="1"/>
</dbReference>
<dbReference type="PROSITE" id="PS50893">
    <property type="entry name" value="ABC_TRANSPORTER_2"/>
    <property type="match status" value="1"/>
</dbReference>
<gene>
    <name type="ordered locus">SAS1788</name>
</gene>